<proteinExistence type="inferred from homology"/>
<gene>
    <name evidence="1" type="primary">hutI</name>
    <name type="ordered locus">YPN_1452</name>
    <name type="ORF">YP516_1611</name>
</gene>
<protein>
    <recommendedName>
        <fullName evidence="1">Imidazolonepropionase</fullName>
        <ecNumber evidence="1">3.5.2.7</ecNumber>
    </recommendedName>
    <alternativeName>
        <fullName evidence="1">Imidazolone-5-propionate hydrolase</fullName>
    </alternativeName>
</protein>
<organism>
    <name type="scientific">Yersinia pestis bv. Antiqua (strain Nepal516)</name>
    <dbReference type="NCBI Taxonomy" id="377628"/>
    <lineage>
        <taxon>Bacteria</taxon>
        <taxon>Pseudomonadati</taxon>
        <taxon>Pseudomonadota</taxon>
        <taxon>Gammaproteobacteria</taxon>
        <taxon>Enterobacterales</taxon>
        <taxon>Yersiniaceae</taxon>
        <taxon>Yersinia</taxon>
    </lineage>
</organism>
<reference key="1">
    <citation type="journal article" date="2006" name="J. Bacteriol.">
        <title>Complete genome sequence of Yersinia pestis strains Antiqua and Nepal516: evidence of gene reduction in an emerging pathogen.</title>
        <authorList>
            <person name="Chain P.S.G."/>
            <person name="Hu P."/>
            <person name="Malfatti S.A."/>
            <person name="Radnedge L."/>
            <person name="Larimer F."/>
            <person name="Vergez L.M."/>
            <person name="Worsham P."/>
            <person name="Chu M.C."/>
            <person name="Andersen G.L."/>
        </authorList>
    </citation>
    <scope>NUCLEOTIDE SEQUENCE [LARGE SCALE GENOMIC DNA]</scope>
    <source>
        <strain>Nepal516</strain>
    </source>
</reference>
<reference key="2">
    <citation type="submission" date="2009-04" db="EMBL/GenBank/DDBJ databases">
        <title>Yersinia pestis Nepal516A whole genome shotgun sequencing project.</title>
        <authorList>
            <person name="Plunkett G. III"/>
            <person name="Anderson B.D."/>
            <person name="Baumler D.J."/>
            <person name="Burland V."/>
            <person name="Cabot E.L."/>
            <person name="Glasner J.D."/>
            <person name="Mau B."/>
            <person name="Neeno-Eckwall E."/>
            <person name="Perna N.T."/>
            <person name="Munk A.C."/>
            <person name="Tapia R."/>
            <person name="Green L.D."/>
            <person name="Rogers Y.C."/>
            <person name="Detter J.C."/>
            <person name="Bruce D.C."/>
            <person name="Brettin T.S."/>
        </authorList>
    </citation>
    <scope>NUCLEOTIDE SEQUENCE [LARGE SCALE GENOMIC DNA]</scope>
    <source>
        <strain>Nepal516</strain>
    </source>
</reference>
<name>HUTI_YERPN</name>
<feature type="chain" id="PRO_0000306542" description="Imidazolonepropionase">
    <location>
        <begin position="1"/>
        <end position="406"/>
    </location>
</feature>
<feature type="binding site" evidence="1">
    <location>
        <position position="72"/>
    </location>
    <ligand>
        <name>Fe(3+)</name>
        <dbReference type="ChEBI" id="CHEBI:29034"/>
    </ligand>
</feature>
<feature type="binding site" evidence="1">
    <location>
        <position position="72"/>
    </location>
    <ligand>
        <name>Zn(2+)</name>
        <dbReference type="ChEBI" id="CHEBI:29105"/>
    </ligand>
</feature>
<feature type="binding site" evidence="1">
    <location>
        <position position="74"/>
    </location>
    <ligand>
        <name>Fe(3+)</name>
        <dbReference type="ChEBI" id="CHEBI:29034"/>
    </ligand>
</feature>
<feature type="binding site" evidence="1">
    <location>
        <position position="74"/>
    </location>
    <ligand>
        <name>Zn(2+)</name>
        <dbReference type="ChEBI" id="CHEBI:29105"/>
    </ligand>
</feature>
<feature type="binding site" evidence="1">
    <location>
        <position position="81"/>
    </location>
    <ligand>
        <name>4-imidazolone-5-propanoate</name>
        <dbReference type="ChEBI" id="CHEBI:77893"/>
    </ligand>
</feature>
<feature type="binding site" evidence="1">
    <location>
        <position position="144"/>
    </location>
    <ligand>
        <name>4-imidazolone-5-propanoate</name>
        <dbReference type="ChEBI" id="CHEBI:77893"/>
    </ligand>
</feature>
<feature type="binding site" evidence="1">
    <location>
        <position position="144"/>
    </location>
    <ligand>
        <name>N-formimidoyl-L-glutamate</name>
        <dbReference type="ChEBI" id="CHEBI:58928"/>
    </ligand>
</feature>
<feature type="binding site" evidence="1">
    <location>
        <position position="177"/>
    </location>
    <ligand>
        <name>4-imidazolone-5-propanoate</name>
        <dbReference type="ChEBI" id="CHEBI:77893"/>
    </ligand>
</feature>
<feature type="binding site" evidence="1">
    <location>
        <position position="242"/>
    </location>
    <ligand>
        <name>Fe(3+)</name>
        <dbReference type="ChEBI" id="CHEBI:29034"/>
    </ligand>
</feature>
<feature type="binding site" evidence="1">
    <location>
        <position position="242"/>
    </location>
    <ligand>
        <name>Zn(2+)</name>
        <dbReference type="ChEBI" id="CHEBI:29105"/>
    </ligand>
</feature>
<feature type="binding site" evidence="1">
    <location>
        <position position="245"/>
    </location>
    <ligand>
        <name>4-imidazolone-5-propanoate</name>
        <dbReference type="ChEBI" id="CHEBI:77893"/>
    </ligand>
</feature>
<feature type="binding site" evidence="1">
    <location>
        <position position="317"/>
    </location>
    <ligand>
        <name>Fe(3+)</name>
        <dbReference type="ChEBI" id="CHEBI:29034"/>
    </ligand>
</feature>
<feature type="binding site" evidence="1">
    <location>
        <position position="317"/>
    </location>
    <ligand>
        <name>Zn(2+)</name>
        <dbReference type="ChEBI" id="CHEBI:29105"/>
    </ligand>
</feature>
<feature type="binding site" evidence="1">
    <location>
        <position position="319"/>
    </location>
    <ligand>
        <name>N-formimidoyl-L-glutamate</name>
        <dbReference type="ChEBI" id="CHEBI:58928"/>
    </ligand>
</feature>
<feature type="binding site" evidence="1">
    <location>
        <position position="321"/>
    </location>
    <ligand>
        <name>N-formimidoyl-L-glutamate</name>
        <dbReference type="ChEBI" id="CHEBI:58928"/>
    </ligand>
</feature>
<feature type="binding site" evidence="1">
    <location>
        <position position="322"/>
    </location>
    <ligand>
        <name>4-imidazolone-5-propanoate</name>
        <dbReference type="ChEBI" id="CHEBI:77893"/>
    </ligand>
</feature>
<dbReference type="EC" id="3.5.2.7" evidence="1"/>
<dbReference type="EMBL" id="CP000305">
    <property type="protein sequence ID" value="ABG17782.1"/>
    <property type="molecule type" value="Genomic_DNA"/>
</dbReference>
<dbReference type="EMBL" id="ACNQ01000009">
    <property type="protein sequence ID" value="EEO76883.1"/>
    <property type="molecule type" value="Genomic_DNA"/>
</dbReference>
<dbReference type="RefSeq" id="WP_002211281.1">
    <property type="nucleotide sequence ID" value="NZ_ACNQ01000009.1"/>
</dbReference>
<dbReference type="SMR" id="Q1CJP8"/>
<dbReference type="GeneID" id="57976686"/>
<dbReference type="KEGG" id="ypn:YPN_1452"/>
<dbReference type="HOGENOM" id="CLU_041647_0_0_6"/>
<dbReference type="UniPathway" id="UPA00379">
    <property type="reaction ID" value="UER00551"/>
</dbReference>
<dbReference type="Proteomes" id="UP000008936">
    <property type="component" value="Chromosome"/>
</dbReference>
<dbReference type="GO" id="GO:0005737">
    <property type="term" value="C:cytoplasm"/>
    <property type="evidence" value="ECO:0007669"/>
    <property type="project" value="UniProtKB-SubCell"/>
</dbReference>
<dbReference type="GO" id="GO:0050480">
    <property type="term" value="F:imidazolonepropionase activity"/>
    <property type="evidence" value="ECO:0007669"/>
    <property type="project" value="UniProtKB-UniRule"/>
</dbReference>
<dbReference type="GO" id="GO:0005506">
    <property type="term" value="F:iron ion binding"/>
    <property type="evidence" value="ECO:0007669"/>
    <property type="project" value="UniProtKB-UniRule"/>
</dbReference>
<dbReference type="GO" id="GO:0008270">
    <property type="term" value="F:zinc ion binding"/>
    <property type="evidence" value="ECO:0007669"/>
    <property type="project" value="UniProtKB-UniRule"/>
</dbReference>
<dbReference type="GO" id="GO:0019556">
    <property type="term" value="P:L-histidine catabolic process to glutamate and formamide"/>
    <property type="evidence" value="ECO:0007669"/>
    <property type="project" value="UniProtKB-UniPathway"/>
</dbReference>
<dbReference type="GO" id="GO:0019557">
    <property type="term" value="P:L-histidine catabolic process to glutamate and formate"/>
    <property type="evidence" value="ECO:0007669"/>
    <property type="project" value="UniProtKB-UniPathway"/>
</dbReference>
<dbReference type="CDD" id="cd01296">
    <property type="entry name" value="Imidazolone-5PH"/>
    <property type="match status" value="1"/>
</dbReference>
<dbReference type="FunFam" id="3.20.20.140:FF:000007">
    <property type="entry name" value="Imidazolonepropionase"/>
    <property type="match status" value="1"/>
</dbReference>
<dbReference type="Gene3D" id="3.20.20.140">
    <property type="entry name" value="Metal-dependent hydrolases"/>
    <property type="match status" value="1"/>
</dbReference>
<dbReference type="Gene3D" id="2.30.40.10">
    <property type="entry name" value="Urease, subunit C, domain 1"/>
    <property type="match status" value="1"/>
</dbReference>
<dbReference type="HAMAP" id="MF_00372">
    <property type="entry name" value="HutI"/>
    <property type="match status" value="1"/>
</dbReference>
<dbReference type="InterPro" id="IPR006680">
    <property type="entry name" value="Amidohydro-rel"/>
</dbReference>
<dbReference type="InterPro" id="IPR005920">
    <property type="entry name" value="HutI"/>
</dbReference>
<dbReference type="InterPro" id="IPR011059">
    <property type="entry name" value="Metal-dep_hydrolase_composite"/>
</dbReference>
<dbReference type="InterPro" id="IPR032466">
    <property type="entry name" value="Metal_Hydrolase"/>
</dbReference>
<dbReference type="NCBIfam" id="TIGR01224">
    <property type="entry name" value="hutI"/>
    <property type="match status" value="1"/>
</dbReference>
<dbReference type="PANTHER" id="PTHR42752">
    <property type="entry name" value="IMIDAZOLONEPROPIONASE"/>
    <property type="match status" value="1"/>
</dbReference>
<dbReference type="PANTHER" id="PTHR42752:SF1">
    <property type="entry name" value="IMIDAZOLONEPROPIONASE-RELATED"/>
    <property type="match status" value="1"/>
</dbReference>
<dbReference type="Pfam" id="PF01979">
    <property type="entry name" value="Amidohydro_1"/>
    <property type="match status" value="1"/>
</dbReference>
<dbReference type="SUPFAM" id="SSF51338">
    <property type="entry name" value="Composite domain of metallo-dependent hydrolases"/>
    <property type="match status" value="1"/>
</dbReference>
<dbReference type="SUPFAM" id="SSF51556">
    <property type="entry name" value="Metallo-dependent hydrolases"/>
    <property type="match status" value="1"/>
</dbReference>
<keyword id="KW-0963">Cytoplasm</keyword>
<keyword id="KW-0369">Histidine metabolism</keyword>
<keyword id="KW-0378">Hydrolase</keyword>
<keyword id="KW-0408">Iron</keyword>
<keyword id="KW-0479">Metal-binding</keyword>
<keyword id="KW-0862">Zinc</keyword>
<accession>Q1CJP8</accession>
<accession>C4GS73</accession>
<evidence type="ECO:0000255" key="1">
    <source>
        <dbReference type="HAMAP-Rule" id="MF_00372"/>
    </source>
</evidence>
<sequence>MVSVTHCDSLWFGADIITMRGGNYQLIPQGAIAVTGDKIVWIGPHAELPPIHAARQVVYEGGLITPGLIDCHTHLVFGDDRSNEFEQRLNGVSYAEIAANGGGIISTVRATRQASEQQLLEQALFRLKPLLAEGVTTIEIKSGYGLNLESEIKMLRVARRLGELLPIDVKTTCLAAHALPPEFIGQPDDYIDVVCNSIIPQVAVENLADAVDAFCEHLAFSPAQVERVFLAAQKAGLPVKLHAEQLSALRGATLAAKFHAISADHLEYATESDVQAMANAGTVAVLLPGAYYLLRETQCPPIDLFRQYKVPMALASDANPGTSPVLSLRLMLNMACTLFRMTPEEALAGVTCHAAQALGVQQTQGTLETGKLANWVHWPLSHPAELAYWLGGQLPATVVFRGEVRP</sequence>
<comment type="function">
    <text evidence="1">Catalyzes the hydrolytic cleavage of the carbon-nitrogen bond in imidazolone-5-propanoate to yield N-formimidoyl-L-glutamate. It is the third step in the universal histidine degradation pathway.</text>
</comment>
<comment type="catalytic activity">
    <reaction evidence="1">
        <text>4-imidazolone-5-propanoate + H2O = N-formimidoyl-L-glutamate</text>
        <dbReference type="Rhea" id="RHEA:23660"/>
        <dbReference type="ChEBI" id="CHEBI:15377"/>
        <dbReference type="ChEBI" id="CHEBI:58928"/>
        <dbReference type="ChEBI" id="CHEBI:77893"/>
        <dbReference type="EC" id="3.5.2.7"/>
    </reaction>
</comment>
<comment type="cofactor">
    <cofactor evidence="1">
        <name>Zn(2+)</name>
        <dbReference type="ChEBI" id="CHEBI:29105"/>
    </cofactor>
    <cofactor evidence="1">
        <name>Fe(3+)</name>
        <dbReference type="ChEBI" id="CHEBI:29034"/>
    </cofactor>
    <text evidence="1">Binds 1 zinc or iron ion per subunit.</text>
</comment>
<comment type="pathway">
    <text evidence="1">Amino-acid degradation; L-histidine degradation into L-glutamate; N-formimidoyl-L-glutamate from L-histidine: step 3/3.</text>
</comment>
<comment type="subcellular location">
    <subcellularLocation>
        <location evidence="1">Cytoplasm</location>
    </subcellularLocation>
</comment>
<comment type="similarity">
    <text evidence="1">Belongs to the metallo-dependent hydrolases superfamily. HutI family.</text>
</comment>